<gene>
    <name type="primary">FAP1</name>
    <name type="ordered locus">At3g63170</name>
    <name type="ORF">F16M2.20</name>
</gene>
<comment type="function">
    <text>Fatty-acid-binding protein. Interacts preferentially with saturated fatty acid. May be involved in alpha-linolenic (C18:3) metabolism.</text>
</comment>
<comment type="subcellular location">
    <subcellularLocation>
        <location evidence="1">Plastid</location>
        <location evidence="1">Chloroplast stroma</location>
    </subcellularLocation>
</comment>
<comment type="tissue specificity">
    <text evidence="1">Expressed in developing cotyledons, young seedlings, roots, seeds, embryos, macrospores, preanthesis and tapetum. Restricted to developing and reproductive tissues.</text>
</comment>
<comment type="disruption phenotype">
    <text evidence="1">No visible phenotype during vegetative growth, but shorter siliques containing a reduced number of viable seeds. Elevated total fatty-acid levels in leaves and seeds of plants grown at 15 and 22 degrees Celsius.</text>
</comment>
<comment type="similarity">
    <text evidence="2">Belongs to the chalcone isomerase family.</text>
</comment>
<evidence type="ECO:0000269" key="1">
    <source>
    </source>
</evidence>
<evidence type="ECO:0000305" key="2"/>
<evidence type="ECO:0007744" key="3">
    <source>
        <dbReference type="PDB" id="4DOO"/>
    </source>
</evidence>
<evidence type="ECO:0007829" key="4">
    <source>
        <dbReference type="PDB" id="4DOO"/>
    </source>
</evidence>
<dbReference type="EMBL" id="AL138648">
    <property type="protein sequence ID" value="CAB86418.1"/>
    <property type="molecule type" value="Genomic_DNA"/>
</dbReference>
<dbReference type="EMBL" id="CP002686">
    <property type="protein sequence ID" value="AEE80443.1"/>
    <property type="molecule type" value="Genomic_DNA"/>
</dbReference>
<dbReference type="EMBL" id="AY065149">
    <property type="protein sequence ID" value="AAL38325.1"/>
    <property type="molecule type" value="mRNA"/>
</dbReference>
<dbReference type="EMBL" id="AY081626">
    <property type="protein sequence ID" value="AAM10188.1"/>
    <property type="molecule type" value="mRNA"/>
</dbReference>
<dbReference type="EMBL" id="AY088229">
    <property type="protein sequence ID" value="AAM65770.1"/>
    <property type="molecule type" value="mRNA"/>
</dbReference>
<dbReference type="PIR" id="T48106">
    <property type="entry name" value="T48106"/>
</dbReference>
<dbReference type="RefSeq" id="NP_567140.1">
    <property type="nucleotide sequence ID" value="NM_116182.5"/>
</dbReference>
<dbReference type="PDB" id="4DOO">
    <property type="method" value="X-ray"/>
    <property type="resolution" value="1.90 A"/>
    <property type="chains" value="A/B=74-278"/>
</dbReference>
<dbReference type="PDBsum" id="4DOO"/>
<dbReference type="SMR" id="Q9M1X2"/>
<dbReference type="FunCoup" id="Q9M1X2">
    <property type="interactions" value="548"/>
</dbReference>
<dbReference type="STRING" id="3702.Q9M1X2"/>
<dbReference type="GlyGen" id="Q9M1X2">
    <property type="glycosylation" value="1 site"/>
</dbReference>
<dbReference type="iPTMnet" id="Q9M1X2"/>
<dbReference type="PaxDb" id="3702-AT3G63170.1"/>
<dbReference type="ProteomicsDB" id="230852"/>
<dbReference type="EnsemblPlants" id="AT3G63170.1">
    <property type="protein sequence ID" value="AT3G63170.1"/>
    <property type="gene ID" value="AT3G63170"/>
</dbReference>
<dbReference type="GeneID" id="825492"/>
<dbReference type="Gramene" id="AT3G63170.1">
    <property type="protein sequence ID" value="AT3G63170.1"/>
    <property type="gene ID" value="AT3G63170"/>
</dbReference>
<dbReference type="KEGG" id="ath:AT3G63170"/>
<dbReference type="Araport" id="AT3G63170"/>
<dbReference type="TAIR" id="AT3G63170">
    <property type="gene designation" value="FAP1"/>
</dbReference>
<dbReference type="eggNOG" id="ENOG502QQ8D">
    <property type="taxonomic scope" value="Eukaryota"/>
</dbReference>
<dbReference type="HOGENOM" id="CLU_070923_1_0_1"/>
<dbReference type="InParanoid" id="Q9M1X2"/>
<dbReference type="OMA" id="PWGSITL"/>
<dbReference type="OrthoDB" id="18193at2759"/>
<dbReference type="PhylomeDB" id="Q9M1X2"/>
<dbReference type="EvolutionaryTrace" id="Q9M1X2"/>
<dbReference type="PRO" id="PR:Q9M1X2"/>
<dbReference type="Proteomes" id="UP000006548">
    <property type="component" value="Chromosome 3"/>
</dbReference>
<dbReference type="ExpressionAtlas" id="Q9M1X2">
    <property type="expression patterns" value="baseline and differential"/>
</dbReference>
<dbReference type="GO" id="GO:0009507">
    <property type="term" value="C:chloroplast"/>
    <property type="evidence" value="ECO:0007005"/>
    <property type="project" value="TAIR"/>
</dbReference>
<dbReference type="GO" id="GO:0009941">
    <property type="term" value="C:chloroplast envelope"/>
    <property type="evidence" value="ECO:0007005"/>
    <property type="project" value="TAIR"/>
</dbReference>
<dbReference type="GO" id="GO:0009570">
    <property type="term" value="C:chloroplast stroma"/>
    <property type="evidence" value="ECO:0000314"/>
    <property type="project" value="TAIR"/>
</dbReference>
<dbReference type="GO" id="GO:0005829">
    <property type="term" value="C:cytosol"/>
    <property type="evidence" value="ECO:0007005"/>
    <property type="project" value="TAIR"/>
</dbReference>
<dbReference type="GO" id="GO:0009536">
    <property type="term" value="C:plastid"/>
    <property type="evidence" value="ECO:0007005"/>
    <property type="project" value="TAIR"/>
</dbReference>
<dbReference type="GO" id="GO:0005504">
    <property type="term" value="F:fatty acid binding"/>
    <property type="evidence" value="ECO:0000353"/>
    <property type="project" value="TAIR"/>
</dbReference>
<dbReference type="GO" id="GO:0016872">
    <property type="term" value="F:intramolecular lyase activity"/>
    <property type="evidence" value="ECO:0007669"/>
    <property type="project" value="InterPro"/>
</dbReference>
<dbReference type="GO" id="GO:0006631">
    <property type="term" value="P:fatty acid metabolic process"/>
    <property type="evidence" value="ECO:0000315"/>
    <property type="project" value="TAIR"/>
</dbReference>
<dbReference type="Gene3D" id="1.10.890.20">
    <property type="match status" value="1"/>
</dbReference>
<dbReference type="Gene3D" id="3.50.70.10">
    <property type="match status" value="1"/>
</dbReference>
<dbReference type="InterPro" id="IPR016087">
    <property type="entry name" value="Chalcone_isomerase"/>
</dbReference>
<dbReference type="InterPro" id="IPR016088">
    <property type="entry name" value="Chalcone_isomerase_3-sand"/>
</dbReference>
<dbReference type="InterPro" id="IPR016089">
    <property type="entry name" value="Chalcone_isomerase_bundle_sf"/>
</dbReference>
<dbReference type="InterPro" id="IPR036298">
    <property type="entry name" value="Chalcone_isomerase_sf"/>
</dbReference>
<dbReference type="InterPro" id="IPR044228">
    <property type="entry name" value="FAP1"/>
</dbReference>
<dbReference type="PANTHER" id="PTHR47589:SF5">
    <property type="entry name" value="CHALCONE ISOMERASE DOMAIN-CONTAINING PROTEIN"/>
    <property type="match status" value="1"/>
</dbReference>
<dbReference type="PANTHER" id="PTHR47589">
    <property type="entry name" value="FATTY-ACID-BINDING PROTEIN 1"/>
    <property type="match status" value="1"/>
</dbReference>
<dbReference type="Pfam" id="PF16035">
    <property type="entry name" value="Chalcone_2"/>
    <property type="match status" value="1"/>
</dbReference>
<dbReference type="SUPFAM" id="SSF54626">
    <property type="entry name" value="Chalcone isomerase"/>
    <property type="match status" value="1"/>
</dbReference>
<protein>
    <recommendedName>
        <fullName>Fatty-acid-binding protein 1</fullName>
        <shortName>AtFAP1</shortName>
    </recommendedName>
    <alternativeName>
        <fullName>Chalcone-flavanone isomerase family protein 1</fullName>
    </alternativeName>
</protein>
<proteinExistence type="evidence at protein level"/>
<sequence>MVSFRFPFSFSQPPRATTSFSGFSISAVAVSVTVGAAAAGAAIAASRNPSHPILEWAFSSHRSSLSPWGSITLADESVVEPKTGFSFPASIGDSRRLLGVGLRKKSLLGLKNIDVYAFGVYADCDDVKKLVGDKYANLPASEIRGNKSFMDDLMEADIKMTIRLQIVYGKLNIRSVRNAFQESVGNRLKKFGGSDNDELLQSFTSLFKDEYKIPRNSTIDLTKDPGHVLSVAIEGNHVGSVKSHLLCRSILDLYIGEEPFDKNAREDFLDNAASLAFDN</sequence>
<feature type="chain" id="PRO_0000422077" description="Fatty-acid-binding protein 1">
    <location>
        <begin position="1"/>
        <end position="279"/>
    </location>
</feature>
<feature type="binding site" evidence="1 3">
    <location>
        <position position="103"/>
    </location>
    <ligand>
        <name>dodecanoate</name>
        <dbReference type="ChEBI" id="CHEBI:18262"/>
    </ligand>
</feature>
<feature type="binding site" evidence="1 3">
    <location>
        <position position="116"/>
    </location>
    <ligand>
        <name>dodecanoate</name>
        <dbReference type="ChEBI" id="CHEBI:18262"/>
    </ligand>
</feature>
<feature type="binding site" evidence="1 3">
    <location>
        <position position="183"/>
    </location>
    <ligand>
        <name>dodecanoate</name>
        <dbReference type="ChEBI" id="CHEBI:18262"/>
    </ligand>
</feature>
<feature type="turn" evidence="4">
    <location>
        <begin position="81"/>
        <end position="83"/>
    </location>
</feature>
<feature type="strand" evidence="4">
    <location>
        <begin position="89"/>
        <end position="91"/>
    </location>
</feature>
<feature type="turn" evidence="4">
    <location>
        <begin position="92"/>
        <end position="94"/>
    </location>
</feature>
<feature type="strand" evidence="4">
    <location>
        <begin position="95"/>
        <end position="106"/>
    </location>
</feature>
<feature type="strand" evidence="4">
    <location>
        <begin position="112"/>
        <end position="123"/>
    </location>
</feature>
<feature type="helix" evidence="4">
    <location>
        <begin position="124"/>
        <end position="134"/>
    </location>
</feature>
<feature type="helix" evidence="4">
    <location>
        <begin position="140"/>
        <end position="144"/>
    </location>
</feature>
<feature type="helix" evidence="4">
    <location>
        <begin position="149"/>
        <end position="155"/>
    </location>
</feature>
<feature type="strand" evidence="4">
    <location>
        <begin position="160"/>
        <end position="166"/>
    </location>
</feature>
<feature type="helix" evidence="4">
    <location>
        <begin position="173"/>
        <end position="191"/>
    </location>
</feature>
<feature type="helix" evidence="4">
    <location>
        <begin position="197"/>
        <end position="204"/>
    </location>
</feature>
<feature type="helix" evidence="4">
    <location>
        <begin position="205"/>
        <end position="207"/>
    </location>
</feature>
<feature type="strand" evidence="4">
    <location>
        <begin position="218"/>
        <end position="224"/>
    </location>
</feature>
<feature type="turn" evidence="4">
    <location>
        <begin position="225"/>
        <end position="227"/>
    </location>
</feature>
<feature type="strand" evidence="4">
    <location>
        <begin position="228"/>
        <end position="233"/>
    </location>
</feature>
<feature type="strand" evidence="4">
    <location>
        <begin position="236"/>
        <end position="242"/>
    </location>
</feature>
<feature type="helix" evidence="4">
    <location>
        <begin position="244"/>
        <end position="255"/>
    </location>
</feature>
<feature type="strand" evidence="4">
    <location>
        <begin position="256"/>
        <end position="258"/>
    </location>
</feature>
<feature type="helix" evidence="4">
    <location>
        <begin position="262"/>
        <end position="275"/>
    </location>
</feature>
<name>FAP1_ARATH</name>
<organism>
    <name type="scientific">Arabidopsis thaliana</name>
    <name type="common">Mouse-ear cress</name>
    <dbReference type="NCBI Taxonomy" id="3702"/>
    <lineage>
        <taxon>Eukaryota</taxon>
        <taxon>Viridiplantae</taxon>
        <taxon>Streptophyta</taxon>
        <taxon>Embryophyta</taxon>
        <taxon>Tracheophyta</taxon>
        <taxon>Spermatophyta</taxon>
        <taxon>Magnoliopsida</taxon>
        <taxon>eudicotyledons</taxon>
        <taxon>Gunneridae</taxon>
        <taxon>Pentapetalae</taxon>
        <taxon>rosids</taxon>
        <taxon>malvids</taxon>
        <taxon>Brassicales</taxon>
        <taxon>Brassicaceae</taxon>
        <taxon>Camelineae</taxon>
        <taxon>Arabidopsis</taxon>
    </lineage>
</organism>
<accession>Q9M1X2</accession>
<keyword id="KW-0002">3D-structure</keyword>
<keyword id="KW-0150">Chloroplast</keyword>
<keyword id="KW-0934">Plastid</keyword>
<keyword id="KW-1185">Reference proteome</keyword>
<reference key="1">
    <citation type="journal article" date="2000" name="Nature">
        <title>Sequence and analysis of chromosome 3 of the plant Arabidopsis thaliana.</title>
        <authorList>
            <person name="Salanoubat M."/>
            <person name="Lemcke K."/>
            <person name="Rieger M."/>
            <person name="Ansorge W."/>
            <person name="Unseld M."/>
            <person name="Fartmann B."/>
            <person name="Valle G."/>
            <person name="Bloecker H."/>
            <person name="Perez-Alonso M."/>
            <person name="Obermaier B."/>
            <person name="Delseny M."/>
            <person name="Boutry M."/>
            <person name="Grivell L.A."/>
            <person name="Mache R."/>
            <person name="Puigdomenech P."/>
            <person name="De Simone V."/>
            <person name="Choisne N."/>
            <person name="Artiguenave F."/>
            <person name="Robert C."/>
            <person name="Brottier P."/>
            <person name="Wincker P."/>
            <person name="Cattolico L."/>
            <person name="Weissenbach J."/>
            <person name="Saurin W."/>
            <person name="Quetier F."/>
            <person name="Schaefer M."/>
            <person name="Mueller-Auer S."/>
            <person name="Gabel C."/>
            <person name="Fuchs M."/>
            <person name="Benes V."/>
            <person name="Wurmbach E."/>
            <person name="Drzonek H."/>
            <person name="Erfle H."/>
            <person name="Jordan N."/>
            <person name="Bangert S."/>
            <person name="Wiedelmann R."/>
            <person name="Kranz H."/>
            <person name="Voss H."/>
            <person name="Holland R."/>
            <person name="Brandt P."/>
            <person name="Nyakatura G."/>
            <person name="Vezzi A."/>
            <person name="D'Angelo M."/>
            <person name="Pallavicini A."/>
            <person name="Toppo S."/>
            <person name="Simionati B."/>
            <person name="Conrad A."/>
            <person name="Hornischer K."/>
            <person name="Kauer G."/>
            <person name="Loehnert T.-H."/>
            <person name="Nordsiek G."/>
            <person name="Reichelt J."/>
            <person name="Scharfe M."/>
            <person name="Schoen O."/>
            <person name="Bargues M."/>
            <person name="Terol J."/>
            <person name="Climent J."/>
            <person name="Navarro P."/>
            <person name="Collado C."/>
            <person name="Perez-Perez A."/>
            <person name="Ottenwaelder B."/>
            <person name="Duchemin D."/>
            <person name="Cooke R."/>
            <person name="Laudie M."/>
            <person name="Berger-Llauro C."/>
            <person name="Purnelle B."/>
            <person name="Masuy D."/>
            <person name="de Haan M."/>
            <person name="Maarse A.C."/>
            <person name="Alcaraz J.-P."/>
            <person name="Cottet A."/>
            <person name="Casacuberta E."/>
            <person name="Monfort A."/>
            <person name="Argiriou A."/>
            <person name="Flores M."/>
            <person name="Liguori R."/>
            <person name="Vitale D."/>
            <person name="Mannhaupt G."/>
            <person name="Haase D."/>
            <person name="Schoof H."/>
            <person name="Rudd S."/>
            <person name="Zaccaria P."/>
            <person name="Mewes H.-W."/>
            <person name="Mayer K.F.X."/>
            <person name="Kaul S."/>
            <person name="Town C.D."/>
            <person name="Koo H.L."/>
            <person name="Tallon L.J."/>
            <person name="Jenkins J."/>
            <person name="Rooney T."/>
            <person name="Rizzo M."/>
            <person name="Walts A."/>
            <person name="Utterback T."/>
            <person name="Fujii C.Y."/>
            <person name="Shea T.P."/>
            <person name="Creasy T.H."/>
            <person name="Haas B."/>
            <person name="Maiti R."/>
            <person name="Wu D."/>
            <person name="Peterson J."/>
            <person name="Van Aken S."/>
            <person name="Pai G."/>
            <person name="Militscher J."/>
            <person name="Sellers P."/>
            <person name="Gill J.E."/>
            <person name="Feldblyum T.V."/>
            <person name="Preuss D."/>
            <person name="Lin X."/>
            <person name="Nierman W.C."/>
            <person name="Salzberg S.L."/>
            <person name="White O."/>
            <person name="Venter J.C."/>
            <person name="Fraser C.M."/>
            <person name="Kaneko T."/>
            <person name="Nakamura Y."/>
            <person name="Sato S."/>
            <person name="Kato T."/>
            <person name="Asamizu E."/>
            <person name="Sasamoto S."/>
            <person name="Kimura T."/>
            <person name="Idesawa K."/>
            <person name="Kawashima K."/>
            <person name="Kishida Y."/>
            <person name="Kiyokawa C."/>
            <person name="Kohara M."/>
            <person name="Matsumoto M."/>
            <person name="Matsuno A."/>
            <person name="Muraki A."/>
            <person name="Nakayama S."/>
            <person name="Nakazaki N."/>
            <person name="Shinpo S."/>
            <person name="Takeuchi C."/>
            <person name="Wada T."/>
            <person name="Watanabe A."/>
            <person name="Yamada M."/>
            <person name="Yasuda M."/>
            <person name="Tabata S."/>
        </authorList>
    </citation>
    <scope>NUCLEOTIDE SEQUENCE [LARGE SCALE GENOMIC DNA]</scope>
    <source>
        <strain>cv. Columbia</strain>
    </source>
</reference>
<reference key="2">
    <citation type="journal article" date="2017" name="Plant J.">
        <title>Araport11: a complete reannotation of the Arabidopsis thaliana reference genome.</title>
        <authorList>
            <person name="Cheng C.Y."/>
            <person name="Krishnakumar V."/>
            <person name="Chan A.P."/>
            <person name="Thibaud-Nissen F."/>
            <person name="Schobel S."/>
            <person name="Town C.D."/>
        </authorList>
    </citation>
    <scope>GENOME REANNOTATION</scope>
    <source>
        <strain>cv. Columbia</strain>
    </source>
</reference>
<reference key="3">
    <citation type="journal article" date="2003" name="Science">
        <title>Empirical analysis of transcriptional activity in the Arabidopsis genome.</title>
        <authorList>
            <person name="Yamada K."/>
            <person name="Lim J."/>
            <person name="Dale J.M."/>
            <person name="Chen H."/>
            <person name="Shinn P."/>
            <person name="Palm C.J."/>
            <person name="Southwick A.M."/>
            <person name="Wu H.C."/>
            <person name="Kim C.J."/>
            <person name="Nguyen M."/>
            <person name="Pham P.K."/>
            <person name="Cheuk R.F."/>
            <person name="Karlin-Newmann G."/>
            <person name="Liu S.X."/>
            <person name="Lam B."/>
            <person name="Sakano H."/>
            <person name="Wu T."/>
            <person name="Yu G."/>
            <person name="Miranda M."/>
            <person name="Quach H.L."/>
            <person name="Tripp M."/>
            <person name="Chang C.H."/>
            <person name="Lee J.M."/>
            <person name="Toriumi M.J."/>
            <person name="Chan M.M."/>
            <person name="Tang C.C."/>
            <person name="Onodera C.S."/>
            <person name="Deng J.M."/>
            <person name="Akiyama K."/>
            <person name="Ansari Y."/>
            <person name="Arakawa T."/>
            <person name="Banh J."/>
            <person name="Banno F."/>
            <person name="Bowser L."/>
            <person name="Brooks S.Y."/>
            <person name="Carninci P."/>
            <person name="Chao Q."/>
            <person name="Choy N."/>
            <person name="Enju A."/>
            <person name="Goldsmith A.D."/>
            <person name="Gurjal M."/>
            <person name="Hansen N.F."/>
            <person name="Hayashizaki Y."/>
            <person name="Johnson-Hopson C."/>
            <person name="Hsuan V.W."/>
            <person name="Iida K."/>
            <person name="Karnes M."/>
            <person name="Khan S."/>
            <person name="Koesema E."/>
            <person name="Ishida J."/>
            <person name="Jiang P.X."/>
            <person name="Jones T."/>
            <person name="Kawai J."/>
            <person name="Kamiya A."/>
            <person name="Meyers C."/>
            <person name="Nakajima M."/>
            <person name="Narusaka M."/>
            <person name="Seki M."/>
            <person name="Sakurai T."/>
            <person name="Satou M."/>
            <person name="Tamse R."/>
            <person name="Vaysberg M."/>
            <person name="Wallender E.K."/>
            <person name="Wong C."/>
            <person name="Yamamura Y."/>
            <person name="Yuan S."/>
            <person name="Shinozaki K."/>
            <person name="Davis R.W."/>
            <person name="Theologis A."/>
            <person name="Ecker J.R."/>
        </authorList>
    </citation>
    <scope>NUCLEOTIDE SEQUENCE [LARGE SCALE MRNA]</scope>
    <source>
        <strain>cv. Columbia</strain>
    </source>
</reference>
<reference key="4">
    <citation type="submission" date="2002-03" db="EMBL/GenBank/DDBJ databases">
        <title>Full-length cDNA from Arabidopsis thaliana.</title>
        <authorList>
            <person name="Brover V.V."/>
            <person name="Troukhan M.E."/>
            <person name="Alexandrov N.A."/>
            <person name="Lu Y.-P."/>
            <person name="Flavell R.B."/>
            <person name="Feldmann K.A."/>
        </authorList>
    </citation>
    <scope>NUCLEOTIDE SEQUENCE [LARGE SCALE MRNA]</scope>
</reference>
<reference evidence="3" key="5">
    <citation type="journal article" date="2012" name="Nature">
        <title>Evolution of the chalcone-isomerase fold from fatty-acid binding to stereospecific catalysis.</title>
        <authorList>
            <person name="Ngaki M.N."/>
            <person name="Louie G.V."/>
            <person name="Philippe R.N."/>
            <person name="Manning G."/>
            <person name="Pojer F."/>
            <person name="Bowman M.E."/>
            <person name="Li L."/>
            <person name="Larsen E."/>
            <person name="Wurtele E.S."/>
            <person name="Noel J.P."/>
        </authorList>
    </citation>
    <scope>X-RAY CRYSTALLOGRAPHY (1.90 ANGSTROMS) OF 74-278 IN COMPLEX WITH DODECANOATE</scope>
    <scope>SUBCELLULAR LOCATION</scope>
    <scope>TISSUE SPECIFICITY</scope>
    <scope>DISRUPTION PHENOTYPE</scope>
</reference>